<keyword id="KW-0472">Membrane</keyword>
<keyword id="KW-0602">Photosynthesis</keyword>
<keyword id="KW-0604">Photosystem II</keyword>
<keyword id="KW-0793">Thylakoid</keyword>
<keyword id="KW-0812">Transmembrane</keyword>
<keyword id="KW-1133">Transmembrane helix</keyword>
<feature type="chain" id="PRO_1000083249" description="Photosystem II reaction center protein Y">
    <location>
        <begin position="1"/>
        <end position="40"/>
    </location>
</feature>
<feature type="transmembrane region" description="Helical" evidence="1">
    <location>
        <begin position="5"/>
        <end position="23"/>
    </location>
</feature>
<evidence type="ECO:0000255" key="1">
    <source>
        <dbReference type="HAMAP-Rule" id="MF_00717"/>
    </source>
</evidence>
<accession>Q5N047</accession>
<name>PSBY_SYNP6</name>
<protein>
    <recommendedName>
        <fullName evidence="1">Photosystem II reaction center protein Y</fullName>
    </recommendedName>
</protein>
<gene>
    <name evidence="1" type="primary">psbY</name>
    <name type="ordered locus">syc2133_c</name>
</gene>
<organism>
    <name type="scientific">Synechococcus sp. (strain ATCC 27144 / PCC 6301 / SAUG 1402/1)</name>
    <name type="common">Anacystis nidulans</name>
    <dbReference type="NCBI Taxonomy" id="269084"/>
    <lineage>
        <taxon>Bacteria</taxon>
        <taxon>Bacillati</taxon>
        <taxon>Cyanobacteriota</taxon>
        <taxon>Cyanophyceae</taxon>
        <taxon>Synechococcales</taxon>
        <taxon>Synechococcaceae</taxon>
        <taxon>Synechococcus</taxon>
    </lineage>
</organism>
<proteinExistence type="inferred from homology"/>
<reference key="1">
    <citation type="journal article" date="2007" name="Photosyn. Res.">
        <title>Complete nucleotide sequence of the freshwater unicellular cyanobacterium Synechococcus elongatus PCC 6301 chromosome: gene content and organization.</title>
        <authorList>
            <person name="Sugita C."/>
            <person name="Ogata K."/>
            <person name="Shikata M."/>
            <person name="Jikuya H."/>
            <person name="Takano J."/>
            <person name="Furumichi M."/>
            <person name="Kanehisa M."/>
            <person name="Omata T."/>
            <person name="Sugiura M."/>
            <person name="Sugita M."/>
        </authorList>
    </citation>
    <scope>NUCLEOTIDE SEQUENCE [LARGE SCALE GENOMIC DNA]</scope>
    <source>
        <strain>ATCC 27144 / PCC 6301 / SAUG 1402/1</strain>
    </source>
</reference>
<sequence>MDWRLIVVLAPILLAGGWAVFNIGKAALEQINRALKGDQA</sequence>
<comment type="function">
    <text evidence="1">Loosely associated component of the core of photosystem II (PSII), it is not always seen in crystals. PSII is a light-driven water plastoquinone oxidoreductase, using light energy to abstract electrons from H(2)O, generating a proton gradient subsequently used for ATP formation.</text>
</comment>
<comment type="subunit">
    <text evidence="1">PSII is composed of 1 copy each of membrane proteins PsbA, PsbB, PsbC, PsbD, PsbE, PsbF, PsbH, PsbI, PsbJ, PsbK, PsbL, PsbM, PsbT, PsbX, PsbY, PsbZ, Psb30/Ycf12, peripheral proteins PsbO, CyanoQ (PsbQ), PsbU, PsbV and a large number of cofactors. It forms dimeric complexes.</text>
</comment>
<comment type="subcellular location">
    <subcellularLocation>
        <location evidence="1">Cellular thylakoid membrane</location>
        <topology evidence="1">Single-pass membrane protein</topology>
    </subcellularLocation>
</comment>
<comment type="similarity">
    <text evidence="1">Belongs to the PsbY family.</text>
</comment>
<dbReference type="EMBL" id="AP008231">
    <property type="protein sequence ID" value="BAD80323.1"/>
    <property type="molecule type" value="Genomic_DNA"/>
</dbReference>
<dbReference type="RefSeq" id="WP_011244443.1">
    <property type="nucleotide sequence ID" value="NZ_CP085785.1"/>
</dbReference>
<dbReference type="SMR" id="Q5N047"/>
<dbReference type="KEGG" id="syc:syc2133_c"/>
<dbReference type="Proteomes" id="UP000001175">
    <property type="component" value="Chromosome"/>
</dbReference>
<dbReference type="GO" id="GO:0009523">
    <property type="term" value="C:photosystem II"/>
    <property type="evidence" value="ECO:0007669"/>
    <property type="project" value="UniProtKB-KW"/>
</dbReference>
<dbReference type="GO" id="GO:0031676">
    <property type="term" value="C:plasma membrane-derived thylakoid membrane"/>
    <property type="evidence" value="ECO:0007669"/>
    <property type="project" value="UniProtKB-SubCell"/>
</dbReference>
<dbReference type="GO" id="GO:0030145">
    <property type="term" value="F:manganese ion binding"/>
    <property type="evidence" value="ECO:0007669"/>
    <property type="project" value="InterPro"/>
</dbReference>
<dbReference type="GO" id="GO:0015979">
    <property type="term" value="P:photosynthesis"/>
    <property type="evidence" value="ECO:0007669"/>
    <property type="project" value="UniProtKB-UniRule"/>
</dbReference>
<dbReference type="HAMAP" id="MF_00717">
    <property type="entry name" value="PSII_PsbY"/>
    <property type="match status" value="1"/>
</dbReference>
<dbReference type="InterPro" id="IPR009388">
    <property type="entry name" value="PSII_PsbY"/>
</dbReference>
<dbReference type="NCBIfam" id="NF009711">
    <property type="entry name" value="PRK13240.1"/>
    <property type="match status" value="1"/>
</dbReference>
<dbReference type="Pfam" id="PF06298">
    <property type="entry name" value="PsbY"/>
    <property type="match status" value="1"/>
</dbReference>